<organism>
    <name type="scientific">Pseudomonas aeruginosa (strain LESB58)</name>
    <dbReference type="NCBI Taxonomy" id="557722"/>
    <lineage>
        <taxon>Bacteria</taxon>
        <taxon>Pseudomonadati</taxon>
        <taxon>Pseudomonadota</taxon>
        <taxon>Gammaproteobacteria</taxon>
        <taxon>Pseudomonadales</taxon>
        <taxon>Pseudomonadaceae</taxon>
        <taxon>Pseudomonas</taxon>
    </lineage>
</organism>
<protein>
    <recommendedName>
        <fullName evidence="1">Ureidoglycolate lyase</fullName>
        <ecNumber evidence="1">4.3.2.3</ecNumber>
    </recommendedName>
    <alternativeName>
        <fullName evidence="1">Ureidoglycolatase</fullName>
    </alternativeName>
</protein>
<name>ALLA_PSEA8</name>
<feature type="chain" id="PRO_1000130418" description="Ureidoglycolate lyase">
    <location>
        <begin position="1"/>
        <end position="169"/>
    </location>
</feature>
<proteinExistence type="inferred from homology"/>
<gene>
    <name evidence="1" type="primary">allA</name>
    <name type="ordered locus">PLES_38961</name>
</gene>
<comment type="function">
    <text evidence="1">Catalyzes the catabolism of the allantoin degradation intermediate (S)-ureidoglycolate, generating urea and glyoxylate. Involved in the utilization of allantoin as nitrogen source.</text>
</comment>
<comment type="catalytic activity">
    <reaction evidence="1">
        <text>(S)-ureidoglycolate = urea + glyoxylate</text>
        <dbReference type="Rhea" id="RHEA:11304"/>
        <dbReference type="ChEBI" id="CHEBI:16199"/>
        <dbReference type="ChEBI" id="CHEBI:36655"/>
        <dbReference type="ChEBI" id="CHEBI:57296"/>
        <dbReference type="EC" id="4.3.2.3"/>
    </reaction>
</comment>
<comment type="cofactor">
    <cofactor evidence="1">
        <name>Ni(2+)</name>
        <dbReference type="ChEBI" id="CHEBI:49786"/>
    </cofactor>
</comment>
<comment type="pathway">
    <text evidence="1">Nitrogen metabolism; (S)-allantoin degradation.</text>
</comment>
<comment type="subunit">
    <text evidence="1">Homodimer.</text>
</comment>
<comment type="similarity">
    <text evidence="1">Belongs to the ureidoglycolate lyase family.</text>
</comment>
<reference key="1">
    <citation type="journal article" date="2009" name="Genome Res.">
        <title>Newly introduced genomic prophage islands are critical determinants of in vivo competitiveness in the Liverpool epidemic strain of Pseudomonas aeruginosa.</title>
        <authorList>
            <person name="Winstanley C."/>
            <person name="Langille M.G.I."/>
            <person name="Fothergill J.L."/>
            <person name="Kukavica-Ibrulj I."/>
            <person name="Paradis-Bleau C."/>
            <person name="Sanschagrin F."/>
            <person name="Thomson N.R."/>
            <person name="Winsor G.L."/>
            <person name="Quail M.A."/>
            <person name="Lennard N."/>
            <person name="Bignell A."/>
            <person name="Clarke L."/>
            <person name="Seeger K."/>
            <person name="Saunders D."/>
            <person name="Harris D."/>
            <person name="Parkhill J."/>
            <person name="Hancock R.E.W."/>
            <person name="Brinkman F.S.L."/>
            <person name="Levesque R.C."/>
        </authorList>
    </citation>
    <scope>NUCLEOTIDE SEQUENCE [LARGE SCALE GENOMIC DNA]</scope>
    <source>
        <strain>LESB58</strain>
    </source>
</reference>
<evidence type="ECO:0000255" key="1">
    <source>
        <dbReference type="HAMAP-Rule" id="MF_00616"/>
    </source>
</evidence>
<keyword id="KW-0456">Lyase</keyword>
<keyword id="KW-0659">Purine metabolism</keyword>
<sequence length="169" mass="18983">MRTLKIEPLTKEAFAPFGDVIETAGSDYFMINNGSTRRYHKLATVETAQPEDNAIISIFSAEKLEMPLRIRMLERHPLGSQAFIPLLGNPFLVVVAPLGDVPVPGLVRAFLTNGRQGVNYHRGVWHHPVLTIEKRDDFLVVDRSGSGNNCDEHFFTEDEQLLLDPQSNQ</sequence>
<accession>B7UW34</accession>
<dbReference type="EC" id="4.3.2.3" evidence="1"/>
<dbReference type="EMBL" id="FM209186">
    <property type="protein sequence ID" value="CAW28639.1"/>
    <property type="molecule type" value="Genomic_DNA"/>
</dbReference>
<dbReference type="RefSeq" id="WP_003083329.1">
    <property type="nucleotide sequence ID" value="NC_011770.1"/>
</dbReference>
<dbReference type="SMR" id="B7UW34"/>
<dbReference type="KEGG" id="pag:PLES_38961"/>
<dbReference type="HOGENOM" id="CLU_070848_1_0_6"/>
<dbReference type="UniPathway" id="UPA00395"/>
<dbReference type="GO" id="GO:0004848">
    <property type="term" value="F:ureidoglycolate hydrolase activity"/>
    <property type="evidence" value="ECO:0007669"/>
    <property type="project" value="InterPro"/>
</dbReference>
<dbReference type="GO" id="GO:0050385">
    <property type="term" value="F:ureidoglycolate lyase activity"/>
    <property type="evidence" value="ECO:0007669"/>
    <property type="project" value="UniProtKB-UniRule"/>
</dbReference>
<dbReference type="GO" id="GO:0000256">
    <property type="term" value="P:allantoin catabolic process"/>
    <property type="evidence" value="ECO:0007669"/>
    <property type="project" value="UniProtKB-UniRule"/>
</dbReference>
<dbReference type="GO" id="GO:0006145">
    <property type="term" value="P:purine nucleobase catabolic process"/>
    <property type="evidence" value="ECO:0007669"/>
    <property type="project" value="UniProtKB-UniRule"/>
</dbReference>
<dbReference type="CDD" id="cd20298">
    <property type="entry name" value="cupin_UAH"/>
    <property type="match status" value="1"/>
</dbReference>
<dbReference type="FunFam" id="2.60.120.480:FF:000001">
    <property type="entry name" value="Ureidoglycolate lyase"/>
    <property type="match status" value="1"/>
</dbReference>
<dbReference type="Gene3D" id="2.60.120.480">
    <property type="entry name" value="Ureidoglycolate hydrolase"/>
    <property type="match status" value="1"/>
</dbReference>
<dbReference type="HAMAP" id="MF_00616">
    <property type="entry name" value="Ureidogly_lyase"/>
    <property type="match status" value="1"/>
</dbReference>
<dbReference type="InterPro" id="IPR011051">
    <property type="entry name" value="RmlC_Cupin_sf"/>
</dbReference>
<dbReference type="InterPro" id="IPR047233">
    <property type="entry name" value="UAH_cupin"/>
</dbReference>
<dbReference type="InterPro" id="IPR007247">
    <property type="entry name" value="Ureidogly_lyase"/>
</dbReference>
<dbReference type="InterPro" id="IPR023525">
    <property type="entry name" value="Ureidogly_lyase_bac"/>
</dbReference>
<dbReference type="InterPro" id="IPR024060">
    <property type="entry name" value="Ureidoglycolate_lyase_dom_sf"/>
</dbReference>
<dbReference type="NCBIfam" id="NF002949">
    <property type="entry name" value="PRK03606.1-2"/>
    <property type="match status" value="1"/>
</dbReference>
<dbReference type="NCBIfam" id="NF009932">
    <property type="entry name" value="PRK13395.1"/>
    <property type="match status" value="1"/>
</dbReference>
<dbReference type="PANTHER" id="PTHR21221">
    <property type="entry name" value="UREIDOGLYCOLATE HYDROLASE"/>
    <property type="match status" value="1"/>
</dbReference>
<dbReference type="PANTHER" id="PTHR21221:SF1">
    <property type="entry name" value="UREIDOGLYCOLATE LYASE"/>
    <property type="match status" value="1"/>
</dbReference>
<dbReference type="Pfam" id="PF04115">
    <property type="entry name" value="Ureidogly_lyase"/>
    <property type="match status" value="1"/>
</dbReference>
<dbReference type="PIRSF" id="PIRSF017306">
    <property type="entry name" value="Ureidogly_hydro"/>
    <property type="match status" value="1"/>
</dbReference>
<dbReference type="SUPFAM" id="SSF51182">
    <property type="entry name" value="RmlC-like cupins"/>
    <property type="match status" value="1"/>
</dbReference>